<organism>
    <name type="scientific">Haemophilus influenzae (strain PittEE)</name>
    <dbReference type="NCBI Taxonomy" id="374930"/>
    <lineage>
        <taxon>Bacteria</taxon>
        <taxon>Pseudomonadati</taxon>
        <taxon>Pseudomonadota</taxon>
        <taxon>Gammaproteobacteria</taxon>
        <taxon>Pasteurellales</taxon>
        <taxon>Pasteurellaceae</taxon>
        <taxon>Haemophilus</taxon>
    </lineage>
</organism>
<dbReference type="EMBL" id="CP000671">
    <property type="protein sequence ID" value="ABQ98927.1"/>
    <property type="molecule type" value="Genomic_DNA"/>
</dbReference>
<dbReference type="SMR" id="A5UDS6"/>
<dbReference type="KEGG" id="hip:CGSHiEE_08070"/>
<dbReference type="HOGENOM" id="CLU_135723_6_2_6"/>
<dbReference type="GO" id="GO:0005737">
    <property type="term" value="C:cytoplasm"/>
    <property type="evidence" value="ECO:0007669"/>
    <property type="project" value="UniProtKB-ARBA"/>
</dbReference>
<dbReference type="GO" id="GO:1990904">
    <property type="term" value="C:ribonucleoprotein complex"/>
    <property type="evidence" value="ECO:0007669"/>
    <property type="project" value="UniProtKB-KW"/>
</dbReference>
<dbReference type="GO" id="GO:0005840">
    <property type="term" value="C:ribosome"/>
    <property type="evidence" value="ECO:0007669"/>
    <property type="project" value="UniProtKB-KW"/>
</dbReference>
<dbReference type="GO" id="GO:0003735">
    <property type="term" value="F:structural constituent of ribosome"/>
    <property type="evidence" value="ECO:0007669"/>
    <property type="project" value="InterPro"/>
</dbReference>
<dbReference type="GO" id="GO:0006412">
    <property type="term" value="P:translation"/>
    <property type="evidence" value="ECO:0007669"/>
    <property type="project" value="UniProtKB-UniRule"/>
</dbReference>
<dbReference type="HAMAP" id="MF_00251">
    <property type="entry name" value="Ribosomal_bL36"/>
    <property type="match status" value="1"/>
</dbReference>
<dbReference type="InterPro" id="IPR000473">
    <property type="entry name" value="Ribosomal_bL36"/>
</dbReference>
<dbReference type="InterPro" id="IPR035977">
    <property type="entry name" value="Ribosomal_bL36_sp"/>
</dbReference>
<dbReference type="NCBIfam" id="TIGR01022">
    <property type="entry name" value="rpmJ_bact"/>
    <property type="match status" value="1"/>
</dbReference>
<dbReference type="PANTHER" id="PTHR42888">
    <property type="entry name" value="50S RIBOSOMAL PROTEIN L36, CHLOROPLASTIC"/>
    <property type="match status" value="1"/>
</dbReference>
<dbReference type="PANTHER" id="PTHR42888:SF1">
    <property type="entry name" value="LARGE RIBOSOMAL SUBUNIT PROTEIN BL36C"/>
    <property type="match status" value="1"/>
</dbReference>
<dbReference type="Pfam" id="PF00444">
    <property type="entry name" value="Ribosomal_L36"/>
    <property type="match status" value="1"/>
</dbReference>
<dbReference type="SUPFAM" id="SSF57840">
    <property type="entry name" value="Ribosomal protein L36"/>
    <property type="match status" value="1"/>
</dbReference>
<dbReference type="PROSITE" id="PS00828">
    <property type="entry name" value="RIBOSOMAL_L36"/>
    <property type="match status" value="1"/>
</dbReference>
<comment type="similarity">
    <text evidence="1">Belongs to the bacterial ribosomal protein bL36 family.</text>
</comment>
<accession>A5UDS6</accession>
<gene>
    <name evidence="1" type="primary">rpmJ</name>
    <name type="ordered locus">CGSHiEE_08070</name>
</gene>
<sequence length="37" mass="4297">MKVRASVKKMCRNCKIVKREGVVRVLCSDPKHKQRQG</sequence>
<evidence type="ECO:0000255" key="1">
    <source>
        <dbReference type="HAMAP-Rule" id="MF_00251"/>
    </source>
</evidence>
<evidence type="ECO:0000305" key="2"/>
<keyword id="KW-0687">Ribonucleoprotein</keyword>
<keyword id="KW-0689">Ribosomal protein</keyword>
<protein>
    <recommendedName>
        <fullName evidence="1">Large ribosomal subunit protein bL36</fullName>
    </recommendedName>
    <alternativeName>
        <fullName evidence="2">50S ribosomal protein L36</fullName>
    </alternativeName>
</protein>
<reference key="1">
    <citation type="journal article" date="2007" name="Genome Biol.">
        <title>Characterization and modeling of the Haemophilus influenzae core and supragenomes based on the complete genomic sequences of Rd and 12 clinical nontypeable strains.</title>
        <authorList>
            <person name="Hogg J.S."/>
            <person name="Hu F.Z."/>
            <person name="Janto B."/>
            <person name="Boissy R."/>
            <person name="Hayes J."/>
            <person name="Keefe R."/>
            <person name="Post J.C."/>
            <person name="Ehrlich G.D."/>
        </authorList>
    </citation>
    <scope>NUCLEOTIDE SEQUENCE [LARGE SCALE GENOMIC DNA]</scope>
    <source>
        <strain>PittEE</strain>
    </source>
</reference>
<name>RL36_HAEIE</name>
<feature type="chain" id="PRO_1000003403" description="Large ribosomal subunit protein bL36">
    <location>
        <begin position="1"/>
        <end position="37"/>
    </location>
</feature>
<proteinExistence type="inferred from homology"/>